<proteinExistence type="evidence at protein level"/>
<reference key="1">
    <citation type="journal article" date="2004" name="Nature">
        <title>Genome sequence of Silicibacter pomeroyi reveals adaptations to the marine environment.</title>
        <authorList>
            <person name="Moran M.A."/>
            <person name="Buchan A."/>
            <person name="Gonzalez J.M."/>
            <person name="Heidelberg J.F."/>
            <person name="Whitman W.B."/>
            <person name="Kiene R.P."/>
            <person name="Henriksen J.R."/>
            <person name="King G.M."/>
            <person name="Belas R."/>
            <person name="Fuqua C."/>
            <person name="Brinkac L.M."/>
            <person name="Lewis M."/>
            <person name="Johri S."/>
            <person name="Weaver B."/>
            <person name="Pai G."/>
            <person name="Eisen J.A."/>
            <person name="Rahe E."/>
            <person name="Sheldon W.M."/>
            <person name="Ye W."/>
            <person name="Miller T.R."/>
            <person name="Carlton J."/>
            <person name="Rasko D.A."/>
            <person name="Paulsen I.T."/>
            <person name="Ren Q."/>
            <person name="Daugherty S.C."/>
            <person name="DeBoy R.T."/>
            <person name="Dodson R.J."/>
            <person name="Durkin A.S."/>
            <person name="Madupu R."/>
            <person name="Nelson W.C."/>
            <person name="Sullivan S.A."/>
            <person name="Rosovitz M.J."/>
            <person name="Haft D.H."/>
            <person name="Selengut J."/>
            <person name="Ward N."/>
        </authorList>
    </citation>
    <scope>NUCLEOTIDE SEQUENCE [LARGE SCALE GENOMIC DNA]</scope>
    <source>
        <strain>ATCC 700808 / DSM 15171 / DSS-3</strain>
    </source>
</reference>
<reference key="2">
    <citation type="journal article" date="2014" name="Stand. Genomic Sci.">
        <title>An updated genome annotation for the model marine bacterium Ruegeria pomeroyi DSS-3.</title>
        <authorList>
            <person name="Rivers A.R."/>
            <person name="Smith C.B."/>
            <person name="Moran M.A."/>
        </authorList>
    </citation>
    <scope>GENOME REANNOTATION</scope>
    <source>
        <strain>ATCC 700808 / DSM 15171 / DSS-3</strain>
    </source>
</reference>
<reference key="3">
    <citation type="journal article" date="2011" name="Nature">
        <title>Novel pathway for assimilation of dimethylsulphoniopropionate widespread in marine bacteria.</title>
        <authorList>
            <person name="Reisch C.R."/>
            <person name="Stoudemayer M.J."/>
            <person name="Varaljay V.A."/>
            <person name="Amster I.J."/>
            <person name="Moran M.A."/>
            <person name="Whitman W.B."/>
        </authorList>
    </citation>
    <scope>FUNCTION</scope>
    <scope>CATALYTIC ACTIVITY</scope>
    <scope>PATHWAY</scope>
    <scope>DISRUPTION PHENOTYPE</scope>
    <source>
        <strain>ATCC 700808 / DSM 15171 / DSS-3</strain>
    </source>
</reference>
<accession>Q5LLW7</accession>
<evidence type="ECO:0000250" key="1">
    <source>
        <dbReference type="UniProtKB" id="A3SI50"/>
    </source>
</evidence>
<evidence type="ECO:0000269" key="2">
    <source>
    </source>
</evidence>
<evidence type="ECO:0000303" key="3">
    <source>
    </source>
</evidence>
<evidence type="ECO:0000305" key="4"/>
<evidence type="ECO:0000312" key="5">
    <source>
        <dbReference type="EMBL" id="AAV97018.1"/>
    </source>
</evidence>
<protein>
    <recommendedName>
        <fullName evidence="4">3-methylmercaptopropionyl-CoA dehydrogenase</fullName>
        <shortName evidence="3">MMPA-CoA dehydrogenase</shortName>
        <ecNumber evidence="2">1.3.99.41</ecNumber>
    </recommendedName>
</protein>
<sequence>MTYQAPVRDIMFAIEHLSQWPQVEALQTYSEIELDDARAALEEFGRFCGEMIAPLSTIGDTEGARLENGRVVLPEGYKTAYDQFVDMGWQSLSHPAEHGGMGLPKVVGAAATEIVNSADMSFGLCPLLTNGAIDALSITGSDAQKAFYLDKLITGRWSGTMNLTEPQAGSDLSRVRCTAVPQDDGTYAISGTKIFITFGEHDLSENIVHLVLARTPDAPEGVRGLSLFVVPKLLAGEGGETSQRNTLGCVSLEHKLGVRASPTAVMEYDNATGYLVGEENSGLRYMFIMMTSARYAVGVQGVAIAERAYQHALSYARDRIQSRPVDGSAQDAVPIIQHPDVRRMLLRMRALTEGGRALAIATGGWLDLAEHGPEEARAEAQSMAEFLVPLVKGFCTERAVEVASLGVQIHGGMGFIEETGVAQFYRDARILPIYEGTTAIQANDLLGRKVLRDGGRTARRFAEMIAATEGELSKGGAAAQRIAQRLAEARAAFAAGLDHLLATAGQDPNRAYAGSVPFLMLTGNLATGWQLGLSALAAEAELAKGGDAEFLQAKIATADIFAQQVLVECSAEHSRITDTGDSLLTASL</sequence>
<name>DMDC_RUEPO</name>
<gene>
    <name evidence="3" type="primary">dmdC</name>
    <name evidence="5" type="ordered locus">SPO3804</name>
</gene>
<organism>
    <name type="scientific">Ruegeria pomeroyi (strain ATCC 700808 / DSM 15171 / DSS-3)</name>
    <name type="common">Silicibacter pomeroyi</name>
    <dbReference type="NCBI Taxonomy" id="246200"/>
    <lineage>
        <taxon>Bacteria</taxon>
        <taxon>Pseudomonadati</taxon>
        <taxon>Pseudomonadota</taxon>
        <taxon>Alphaproteobacteria</taxon>
        <taxon>Rhodobacterales</taxon>
        <taxon>Roseobacteraceae</taxon>
        <taxon>Ruegeria</taxon>
    </lineage>
</organism>
<feature type="chain" id="PRO_0000433904" description="3-methylmercaptopropionyl-CoA dehydrogenase">
    <location>
        <begin position="1"/>
        <end position="588"/>
    </location>
</feature>
<feature type="active site" description="Proton acceptor" evidence="1">
    <location>
        <position position="435"/>
    </location>
</feature>
<comment type="function">
    <text evidence="2">Involved in the assimilation of dimethylsulphoniopropionate (DMSP), an important compound in the fixation of carbon in marine phytoplankton, by mediating the conversion of 3-(methylthio)propanoyl-CoA (MMPA-CoA) to 3-(methylthio)acryloyl-CoA (MTA-CoA).</text>
</comment>
<comment type="catalytic activity">
    <reaction evidence="2">
        <text>3-(methylsulfanyl)propanoyl-CoA + oxidized [electron-transfer flavoprotein] + H(+) = 3-(methylsulfanyl)acryloyl-CoA + reduced [electron-transfer flavoprotein]</text>
        <dbReference type="Rhea" id="RHEA:52612"/>
        <dbReference type="Rhea" id="RHEA-COMP:10685"/>
        <dbReference type="Rhea" id="RHEA-COMP:10686"/>
        <dbReference type="ChEBI" id="CHEBI:15378"/>
        <dbReference type="ChEBI" id="CHEBI:57692"/>
        <dbReference type="ChEBI" id="CHEBI:58307"/>
        <dbReference type="ChEBI" id="CHEBI:82815"/>
        <dbReference type="ChEBI" id="CHEBI:84994"/>
        <dbReference type="EC" id="1.3.99.41"/>
    </reaction>
    <physiologicalReaction direction="left-to-right" evidence="2">
        <dbReference type="Rhea" id="RHEA:52613"/>
    </physiologicalReaction>
</comment>
<comment type="cofactor">
    <cofactor evidence="1">
        <name>FAD</name>
        <dbReference type="ChEBI" id="CHEBI:57692"/>
    </cofactor>
</comment>
<comment type="disruption phenotype">
    <text evidence="2">Cells lacking this gene do not grow on methylmercaptopropionate (MMPA) as the sole source of carbon.</text>
</comment>
<comment type="similarity">
    <text evidence="4">Belongs to the acyl-CoA dehydrogenase family.</text>
</comment>
<keyword id="KW-0274">FAD</keyword>
<keyword id="KW-0285">Flavoprotein</keyword>
<keyword id="KW-0560">Oxidoreductase</keyword>
<keyword id="KW-1185">Reference proteome</keyword>
<dbReference type="EC" id="1.3.99.41" evidence="2"/>
<dbReference type="EMBL" id="CP000031">
    <property type="protein sequence ID" value="AAV97018.1"/>
    <property type="molecule type" value="Genomic_DNA"/>
</dbReference>
<dbReference type="RefSeq" id="WP_011049476.1">
    <property type="nucleotide sequence ID" value="NC_003911.12"/>
</dbReference>
<dbReference type="SMR" id="Q5LLW7"/>
<dbReference type="STRING" id="246200.SPO3804"/>
<dbReference type="PaxDb" id="246200-SPO3804"/>
<dbReference type="KEGG" id="sil:SPO3804"/>
<dbReference type="eggNOG" id="COG1960">
    <property type="taxonomic scope" value="Bacteria"/>
</dbReference>
<dbReference type="HOGENOM" id="CLU_018204_12_2_5"/>
<dbReference type="OrthoDB" id="9807883at2"/>
<dbReference type="BioCyc" id="MetaCyc:MONOMER-16784"/>
<dbReference type="BRENDA" id="1.3.99.B13">
    <property type="organism ID" value="8123"/>
</dbReference>
<dbReference type="Proteomes" id="UP000001023">
    <property type="component" value="Chromosome"/>
</dbReference>
<dbReference type="GO" id="GO:0050660">
    <property type="term" value="F:flavin adenine dinucleotide binding"/>
    <property type="evidence" value="ECO:0000314"/>
    <property type="project" value="UniProtKB"/>
</dbReference>
<dbReference type="GO" id="GO:0052890">
    <property type="term" value="F:oxidoreductase activity, acting on the CH-CH group of donors, with a flavin as acceptor"/>
    <property type="evidence" value="ECO:0000314"/>
    <property type="project" value="UniProtKB"/>
</dbReference>
<dbReference type="FunFam" id="1.20.140.10:FF:000016">
    <property type="entry name" value="Acyl-CoA dehydrogenase FadE5"/>
    <property type="match status" value="1"/>
</dbReference>
<dbReference type="FunFam" id="2.40.110.10:FF:000031">
    <property type="entry name" value="Acyl-CoA dehydrogenase, putative"/>
    <property type="match status" value="1"/>
</dbReference>
<dbReference type="FunFam" id="1.10.540.10:FF:000080">
    <property type="entry name" value="Probable acyl-coA dehydrogenase"/>
    <property type="match status" value="1"/>
</dbReference>
<dbReference type="Gene3D" id="1.10.540.10">
    <property type="entry name" value="Acyl-CoA dehydrogenase/oxidase, N-terminal domain"/>
    <property type="match status" value="1"/>
</dbReference>
<dbReference type="Gene3D" id="2.40.110.10">
    <property type="entry name" value="Butyryl-CoA Dehydrogenase, subunit A, domain 2"/>
    <property type="match status" value="1"/>
</dbReference>
<dbReference type="Gene3D" id="1.20.140.10">
    <property type="entry name" value="Butyryl-CoA Dehydrogenase, subunit A, domain 3"/>
    <property type="match status" value="1"/>
</dbReference>
<dbReference type="InterPro" id="IPR025878">
    <property type="entry name" value="Acyl-CoA_dh-like_C_dom"/>
</dbReference>
<dbReference type="InterPro" id="IPR006091">
    <property type="entry name" value="Acyl-CoA_Oxase/DH_mid-dom"/>
</dbReference>
<dbReference type="InterPro" id="IPR046373">
    <property type="entry name" value="Acyl-CoA_Oxase/DH_mid-dom_sf"/>
</dbReference>
<dbReference type="InterPro" id="IPR036250">
    <property type="entry name" value="AcylCo_DH-like_C"/>
</dbReference>
<dbReference type="InterPro" id="IPR009075">
    <property type="entry name" value="AcylCo_DH/oxidase_C"/>
</dbReference>
<dbReference type="InterPro" id="IPR013786">
    <property type="entry name" value="AcylCoA_DH/ox_N"/>
</dbReference>
<dbReference type="InterPro" id="IPR037069">
    <property type="entry name" value="AcylCoA_DH/ox_N_sf"/>
</dbReference>
<dbReference type="InterPro" id="IPR009100">
    <property type="entry name" value="AcylCoA_DH/oxidase_NM_dom_sf"/>
</dbReference>
<dbReference type="InterPro" id="IPR052166">
    <property type="entry name" value="Diverse_Acyl-CoA_DH"/>
</dbReference>
<dbReference type="PANTHER" id="PTHR42803">
    <property type="entry name" value="ACYL-COA DEHYDROGENASE"/>
    <property type="match status" value="1"/>
</dbReference>
<dbReference type="PANTHER" id="PTHR42803:SF1">
    <property type="entry name" value="BROAD-SPECIFICITY LINEAR ACYL-COA DEHYDROGENASE FADE5"/>
    <property type="match status" value="1"/>
</dbReference>
<dbReference type="Pfam" id="PF00441">
    <property type="entry name" value="Acyl-CoA_dh_1"/>
    <property type="match status" value="1"/>
</dbReference>
<dbReference type="Pfam" id="PF12806">
    <property type="entry name" value="Acyl-CoA_dh_C"/>
    <property type="match status" value="1"/>
</dbReference>
<dbReference type="Pfam" id="PF02770">
    <property type="entry name" value="Acyl-CoA_dh_M"/>
    <property type="match status" value="1"/>
</dbReference>
<dbReference type="Pfam" id="PF02771">
    <property type="entry name" value="Acyl-CoA_dh_N"/>
    <property type="match status" value="1"/>
</dbReference>
<dbReference type="SUPFAM" id="SSF47203">
    <property type="entry name" value="Acyl-CoA dehydrogenase C-terminal domain-like"/>
    <property type="match status" value="1"/>
</dbReference>
<dbReference type="SUPFAM" id="SSF56645">
    <property type="entry name" value="Acyl-CoA dehydrogenase NM domain-like"/>
    <property type="match status" value="1"/>
</dbReference>